<reference key="1">
    <citation type="journal article" date="2008" name="DNA Res.">
        <title>Complete genome sequence and comparative analysis of the wild-type commensal Escherichia coli strain SE11 isolated from a healthy adult.</title>
        <authorList>
            <person name="Oshima K."/>
            <person name="Toh H."/>
            <person name="Ogura Y."/>
            <person name="Sasamoto H."/>
            <person name="Morita H."/>
            <person name="Park S.-H."/>
            <person name="Ooka T."/>
            <person name="Iyoda S."/>
            <person name="Taylor T.D."/>
            <person name="Hayashi T."/>
            <person name="Itoh K."/>
            <person name="Hattori M."/>
        </authorList>
    </citation>
    <scope>NUCLEOTIDE SEQUENCE [LARGE SCALE GENOMIC DNA]</scope>
    <source>
        <strain>SE11</strain>
    </source>
</reference>
<gene>
    <name evidence="1" type="primary">rplR</name>
    <name type="ordered locus">ECSE_3579</name>
</gene>
<feature type="chain" id="PRO_1000142662" description="Large ribosomal subunit protein uL18">
    <location>
        <begin position="1"/>
        <end position="117"/>
    </location>
</feature>
<protein>
    <recommendedName>
        <fullName evidence="1">Large ribosomal subunit protein uL18</fullName>
    </recommendedName>
    <alternativeName>
        <fullName evidence="2">50S ribosomal protein L18</fullName>
    </alternativeName>
</protein>
<evidence type="ECO:0000255" key="1">
    <source>
        <dbReference type="HAMAP-Rule" id="MF_01337"/>
    </source>
</evidence>
<evidence type="ECO:0000305" key="2"/>
<organism>
    <name type="scientific">Escherichia coli (strain SE11)</name>
    <dbReference type="NCBI Taxonomy" id="409438"/>
    <lineage>
        <taxon>Bacteria</taxon>
        <taxon>Pseudomonadati</taxon>
        <taxon>Pseudomonadota</taxon>
        <taxon>Gammaproteobacteria</taxon>
        <taxon>Enterobacterales</taxon>
        <taxon>Enterobacteriaceae</taxon>
        <taxon>Escherichia</taxon>
    </lineage>
</organism>
<keyword id="KW-0687">Ribonucleoprotein</keyword>
<keyword id="KW-0689">Ribosomal protein</keyword>
<keyword id="KW-0694">RNA-binding</keyword>
<keyword id="KW-0699">rRNA-binding</keyword>
<sequence length="117" mass="12770">MDKKSARIRRATRARRKLQELGATRLVVHRTPRHIYAQVIAPNGSEVLVAASTVEKAIAEQLKYTGNKDAAAAVGKAVAERALEKGIKDVSFDRSGFQYHGRVQALADAAREAGLQF</sequence>
<name>RL18_ECOSE</name>
<dbReference type="EMBL" id="AP009240">
    <property type="protein sequence ID" value="BAG79103.1"/>
    <property type="molecule type" value="Genomic_DNA"/>
</dbReference>
<dbReference type="RefSeq" id="WP_000358960.1">
    <property type="nucleotide sequence ID" value="NC_011415.1"/>
</dbReference>
<dbReference type="SMR" id="B6I218"/>
<dbReference type="GeneID" id="98390426"/>
<dbReference type="KEGG" id="ecy:ECSE_3579"/>
<dbReference type="HOGENOM" id="CLU_098841_0_1_6"/>
<dbReference type="Proteomes" id="UP000008199">
    <property type="component" value="Chromosome"/>
</dbReference>
<dbReference type="GO" id="GO:0022625">
    <property type="term" value="C:cytosolic large ribosomal subunit"/>
    <property type="evidence" value="ECO:0007669"/>
    <property type="project" value="TreeGrafter"/>
</dbReference>
<dbReference type="GO" id="GO:0008097">
    <property type="term" value="F:5S rRNA binding"/>
    <property type="evidence" value="ECO:0007669"/>
    <property type="project" value="TreeGrafter"/>
</dbReference>
<dbReference type="GO" id="GO:0003735">
    <property type="term" value="F:structural constituent of ribosome"/>
    <property type="evidence" value="ECO:0007669"/>
    <property type="project" value="InterPro"/>
</dbReference>
<dbReference type="GO" id="GO:0006412">
    <property type="term" value="P:translation"/>
    <property type="evidence" value="ECO:0007669"/>
    <property type="project" value="UniProtKB-UniRule"/>
</dbReference>
<dbReference type="CDD" id="cd00432">
    <property type="entry name" value="Ribosomal_L18_L5e"/>
    <property type="match status" value="1"/>
</dbReference>
<dbReference type="FunFam" id="3.30.420.100:FF:000001">
    <property type="entry name" value="50S ribosomal protein L18"/>
    <property type="match status" value="1"/>
</dbReference>
<dbReference type="Gene3D" id="3.30.420.100">
    <property type="match status" value="1"/>
</dbReference>
<dbReference type="HAMAP" id="MF_01337_B">
    <property type="entry name" value="Ribosomal_uL18_B"/>
    <property type="match status" value="1"/>
</dbReference>
<dbReference type="InterPro" id="IPR004389">
    <property type="entry name" value="Ribosomal_uL18_bac-type"/>
</dbReference>
<dbReference type="InterPro" id="IPR005484">
    <property type="entry name" value="Ribosomal_uL18_bac/euk"/>
</dbReference>
<dbReference type="NCBIfam" id="TIGR00060">
    <property type="entry name" value="L18_bact"/>
    <property type="match status" value="1"/>
</dbReference>
<dbReference type="PANTHER" id="PTHR12899">
    <property type="entry name" value="39S RIBOSOMAL PROTEIN L18, MITOCHONDRIAL"/>
    <property type="match status" value="1"/>
</dbReference>
<dbReference type="PANTHER" id="PTHR12899:SF3">
    <property type="entry name" value="LARGE RIBOSOMAL SUBUNIT PROTEIN UL18M"/>
    <property type="match status" value="1"/>
</dbReference>
<dbReference type="Pfam" id="PF00861">
    <property type="entry name" value="Ribosomal_L18p"/>
    <property type="match status" value="1"/>
</dbReference>
<dbReference type="SUPFAM" id="SSF53137">
    <property type="entry name" value="Translational machinery components"/>
    <property type="match status" value="1"/>
</dbReference>
<proteinExistence type="inferred from homology"/>
<accession>B6I218</accession>
<comment type="function">
    <text evidence="1">This is one of the proteins that bind and probably mediate the attachment of the 5S RNA into the large ribosomal subunit, where it forms part of the central protuberance.</text>
</comment>
<comment type="subunit">
    <text evidence="1">Part of the 50S ribosomal subunit; part of the 5S rRNA/L5/L18/L25 subcomplex. Contacts the 5S and 23S rRNAs.</text>
</comment>
<comment type="similarity">
    <text evidence="1">Belongs to the universal ribosomal protein uL18 family.</text>
</comment>